<organism>
    <name type="scientific">Agrobacterium fabrum (strain C58 / ATCC 33970)</name>
    <name type="common">Agrobacterium tumefaciens (strain C58)</name>
    <dbReference type="NCBI Taxonomy" id="176299"/>
    <lineage>
        <taxon>Bacteria</taxon>
        <taxon>Pseudomonadati</taxon>
        <taxon>Pseudomonadota</taxon>
        <taxon>Alphaproteobacteria</taxon>
        <taxon>Hyphomicrobiales</taxon>
        <taxon>Rhizobiaceae</taxon>
        <taxon>Rhizobium/Agrobacterium group</taxon>
        <taxon>Agrobacterium</taxon>
        <taxon>Agrobacterium tumefaciens complex</taxon>
    </lineage>
</organism>
<feature type="chain" id="PRO_0000157498" description="Large ribosomal subunit protein bL12">
    <location>
        <begin position="1"/>
        <end position="125"/>
    </location>
</feature>
<proteinExistence type="evidence at protein level"/>
<keyword id="KW-1185">Reference proteome</keyword>
<keyword id="KW-0687">Ribonucleoprotein</keyword>
<keyword id="KW-0689">Ribosomal protein</keyword>
<sequence>MADLAKIVEDLSTLTVLEAAELSKLLEEKWGVSAAAPVAVAAAGGAGAAAAVEEEKTEFDVVLVDAGANKINVIKEVRAITGLGLKEAKDLVEGAPKAVKEAVSKAEAADLKKKLEDAGAKVDVK</sequence>
<reference key="1">
    <citation type="journal article" date="2001" name="Science">
        <title>The genome of the natural genetic engineer Agrobacterium tumefaciens C58.</title>
        <authorList>
            <person name="Wood D.W."/>
            <person name="Setubal J.C."/>
            <person name="Kaul R."/>
            <person name="Monks D.E."/>
            <person name="Kitajima J.P."/>
            <person name="Okura V.K."/>
            <person name="Zhou Y."/>
            <person name="Chen L."/>
            <person name="Wood G.E."/>
            <person name="Almeida N.F. Jr."/>
            <person name="Woo L."/>
            <person name="Chen Y."/>
            <person name="Paulsen I.T."/>
            <person name="Eisen J.A."/>
            <person name="Karp P.D."/>
            <person name="Bovee D. Sr."/>
            <person name="Chapman P."/>
            <person name="Clendenning J."/>
            <person name="Deatherage G."/>
            <person name="Gillet W."/>
            <person name="Grant C."/>
            <person name="Kutyavin T."/>
            <person name="Levy R."/>
            <person name="Li M.-J."/>
            <person name="McClelland E."/>
            <person name="Palmieri A."/>
            <person name="Raymond C."/>
            <person name="Rouse G."/>
            <person name="Saenphimmachak C."/>
            <person name="Wu Z."/>
            <person name="Romero P."/>
            <person name="Gordon D."/>
            <person name="Zhang S."/>
            <person name="Yoo H."/>
            <person name="Tao Y."/>
            <person name="Biddle P."/>
            <person name="Jung M."/>
            <person name="Krespan W."/>
            <person name="Perry M."/>
            <person name="Gordon-Kamm B."/>
            <person name="Liao L."/>
            <person name="Kim S."/>
            <person name="Hendrick C."/>
            <person name="Zhao Z.-Y."/>
            <person name="Dolan M."/>
            <person name="Chumley F."/>
            <person name="Tingey S.V."/>
            <person name="Tomb J.-F."/>
            <person name="Gordon M.P."/>
            <person name="Olson M.V."/>
            <person name="Nester E.W."/>
        </authorList>
    </citation>
    <scope>NUCLEOTIDE SEQUENCE [LARGE SCALE GENOMIC DNA]</scope>
    <source>
        <strain>C58 / ATCC 33970</strain>
    </source>
</reference>
<reference key="2">
    <citation type="journal article" date="2001" name="Science">
        <title>Genome sequence of the plant pathogen and biotechnology agent Agrobacterium tumefaciens C58.</title>
        <authorList>
            <person name="Goodner B."/>
            <person name="Hinkle G."/>
            <person name="Gattung S."/>
            <person name="Miller N."/>
            <person name="Blanchard M."/>
            <person name="Qurollo B."/>
            <person name="Goldman B.S."/>
            <person name="Cao Y."/>
            <person name="Askenazi M."/>
            <person name="Halling C."/>
            <person name="Mullin L."/>
            <person name="Houmiel K."/>
            <person name="Gordon J."/>
            <person name="Vaudin M."/>
            <person name="Iartchouk O."/>
            <person name="Epp A."/>
            <person name="Liu F."/>
            <person name="Wollam C."/>
            <person name="Allinger M."/>
            <person name="Doughty D."/>
            <person name="Scott C."/>
            <person name="Lappas C."/>
            <person name="Markelz B."/>
            <person name="Flanagan C."/>
            <person name="Crowell C."/>
            <person name="Gurson J."/>
            <person name="Lomo C."/>
            <person name="Sear C."/>
            <person name="Strub G."/>
            <person name="Cielo C."/>
            <person name="Slater S."/>
        </authorList>
    </citation>
    <scope>NUCLEOTIDE SEQUENCE [LARGE SCALE GENOMIC DNA]</scope>
    <source>
        <strain>C58 / ATCC 33970</strain>
    </source>
</reference>
<reference key="3">
    <citation type="journal article" date="2009" name="Bull. Exp. Biol. Med.">
        <title>Studying the copy number of ribosomal protein L7/L12.</title>
        <authorList>
            <person name="Grebenyuk E.S."/>
            <person name="Dokrunova A.A."/>
            <person name="Davydov I.I."/>
            <person name="Tonevitsky E.A."/>
            <person name="Tonevitsky A.G."/>
        </authorList>
    </citation>
    <scope>SUBUNIT</scope>
    <scope>STOICHIOMETRY</scope>
</reference>
<protein>
    <recommendedName>
        <fullName evidence="1">Large ribosomal subunit protein bL12</fullName>
    </recommendedName>
    <alternativeName>
        <fullName evidence="3">50S ribosomal protein L7/L12</fullName>
    </alternativeName>
</protein>
<comment type="function">
    <text evidence="1">Forms part of the ribosomal stalk which helps the ribosome interact with GTP-bound translation factors. Is thus essential for accurate translation.</text>
</comment>
<comment type="subunit">
    <text evidence="2">Homodimer. Part of the 50S ribosomal subunit; present in 6 copies per ribosome. Forms part of the ribosomal stalk which helps the ribosome interact with GTP-bound translation factors. Forms a heptameric L10(L12)2(L12)2(L12)2 complex, where L10 forms an elongated spine to which 3 L12 dimers bind in a sequential fashion.</text>
</comment>
<comment type="similarity">
    <text evidence="1">Belongs to the bacterial ribosomal protein bL12 family.</text>
</comment>
<dbReference type="EMBL" id="AE007869">
    <property type="protein sequence ID" value="AAK87717.1"/>
    <property type="molecule type" value="Genomic_DNA"/>
</dbReference>
<dbReference type="PIR" id="AC2817">
    <property type="entry name" value="AC2817"/>
</dbReference>
<dbReference type="PIR" id="D97595">
    <property type="entry name" value="D97595"/>
</dbReference>
<dbReference type="RefSeq" id="NP_354932.1">
    <property type="nucleotide sequence ID" value="NC_003062.2"/>
</dbReference>
<dbReference type="RefSeq" id="WP_006316437.1">
    <property type="nucleotide sequence ID" value="NC_003062.2"/>
</dbReference>
<dbReference type="SMR" id="Q8UE07"/>
<dbReference type="STRING" id="176299.Atu1957"/>
<dbReference type="EnsemblBacteria" id="AAK87717">
    <property type="protein sequence ID" value="AAK87717"/>
    <property type="gene ID" value="Atu1957"/>
</dbReference>
<dbReference type="GeneID" id="1133995"/>
<dbReference type="KEGG" id="atu:Atu1957"/>
<dbReference type="PATRIC" id="fig|176299.10.peg.1970"/>
<dbReference type="eggNOG" id="COG0222">
    <property type="taxonomic scope" value="Bacteria"/>
</dbReference>
<dbReference type="HOGENOM" id="CLU_086499_3_0_5"/>
<dbReference type="OrthoDB" id="9811748at2"/>
<dbReference type="PhylomeDB" id="Q8UE07"/>
<dbReference type="BioCyc" id="AGRO:ATU1957-MONOMER"/>
<dbReference type="Proteomes" id="UP000000813">
    <property type="component" value="Chromosome circular"/>
</dbReference>
<dbReference type="GO" id="GO:0022625">
    <property type="term" value="C:cytosolic large ribosomal subunit"/>
    <property type="evidence" value="ECO:0007669"/>
    <property type="project" value="TreeGrafter"/>
</dbReference>
<dbReference type="GO" id="GO:0003729">
    <property type="term" value="F:mRNA binding"/>
    <property type="evidence" value="ECO:0007669"/>
    <property type="project" value="TreeGrafter"/>
</dbReference>
<dbReference type="GO" id="GO:0003735">
    <property type="term" value="F:structural constituent of ribosome"/>
    <property type="evidence" value="ECO:0007669"/>
    <property type="project" value="InterPro"/>
</dbReference>
<dbReference type="GO" id="GO:0006412">
    <property type="term" value="P:translation"/>
    <property type="evidence" value="ECO:0007669"/>
    <property type="project" value="UniProtKB-UniRule"/>
</dbReference>
<dbReference type="CDD" id="cd00387">
    <property type="entry name" value="Ribosomal_L7_L12"/>
    <property type="match status" value="1"/>
</dbReference>
<dbReference type="FunFam" id="1.20.5.710:FF:000007">
    <property type="entry name" value="50S ribosomal protein L7/L12"/>
    <property type="match status" value="1"/>
</dbReference>
<dbReference type="FunFam" id="3.30.1390.10:FF:000001">
    <property type="entry name" value="50S ribosomal protein L7/L12"/>
    <property type="match status" value="1"/>
</dbReference>
<dbReference type="Gene3D" id="3.30.1390.10">
    <property type="match status" value="1"/>
</dbReference>
<dbReference type="Gene3D" id="1.20.5.710">
    <property type="entry name" value="Single helix bin"/>
    <property type="match status" value="1"/>
</dbReference>
<dbReference type="HAMAP" id="MF_00368">
    <property type="entry name" value="Ribosomal_bL12"/>
    <property type="match status" value="1"/>
</dbReference>
<dbReference type="InterPro" id="IPR000206">
    <property type="entry name" value="Ribosomal_bL12"/>
</dbReference>
<dbReference type="InterPro" id="IPR013823">
    <property type="entry name" value="Ribosomal_bL12_C"/>
</dbReference>
<dbReference type="InterPro" id="IPR014719">
    <property type="entry name" value="Ribosomal_bL12_C/ClpS-like"/>
</dbReference>
<dbReference type="InterPro" id="IPR008932">
    <property type="entry name" value="Ribosomal_bL12_oligo"/>
</dbReference>
<dbReference type="InterPro" id="IPR036235">
    <property type="entry name" value="Ribosomal_bL12_oligo_N_sf"/>
</dbReference>
<dbReference type="NCBIfam" id="TIGR00855">
    <property type="entry name" value="L12"/>
    <property type="match status" value="1"/>
</dbReference>
<dbReference type="PANTHER" id="PTHR45987">
    <property type="entry name" value="39S RIBOSOMAL PROTEIN L12"/>
    <property type="match status" value="1"/>
</dbReference>
<dbReference type="PANTHER" id="PTHR45987:SF4">
    <property type="entry name" value="LARGE RIBOSOMAL SUBUNIT PROTEIN BL12M"/>
    <property type="match status" value="1"/>
</dbReference>
<dbReference type="Pfam" id="PF00542">
    <property type="entry name" value="Ribosomal_L12"/>
    <property type="match status" value="1"/>
</dbReference>
<dbReference type="Pfam" id="PF16320">
    <property type="entry name" value="Ribosomal_L12_N"/>
    <property type="match status" value="1"/>
</dbReference>
<dbReference type="SUPFAM" id="SSF54736">
    <property type="entry name" value="ClpS-like"/>
    <property type="match status" value="1"/>
</dbReference>
<dbReference type="SUPFAM" id="SSF48300">
    <property type="entry name" value="Ribosomal protein L7/12, oligomerisation (N-terminal) domain"/>
    <property type="match status" value="1"/>
</dbReference>
<accession>Q8UE07</accession>
<gene>
    <name evidence="1" type="primary">rplL</name>
    <name type="ordered locus">Atu1957</name>
    <name type="ORF">AGR_C_3571</name>
</gene>
<name>RL7_AGRFC</name>
<evidence type="ECO:0000255" key="1">
    <source>
        <dbReference type="HAMAP-Rule" id="MF_00368"/>
    </source>
</evidence>
<evidence type="ECO:0000269" key="2">
    <source>
    </source>
</evidence>
<evidence type="ECO:0000305" key="3"/>